<reference key="1">
    <citation type="journal article" date="2014" name="Mol. Biol. Evol.">
        <title>Clawing through evolution: toxin diversification and convergence in the ancient lineage Chilopoda (centipedes).</title>
        <authorList>
            <person name="Undheim E.A."/>
            <person name="Jones A."/>
            <person name="Clauser K.R."/>
            <person name="Holland J.W."/>
            <person name="Pineda S.S."/>
            <person name="King G.F."/>
            <person name="Fry B.G."/>
        </authorList>
    </citation>
    <scope>NUCLEOTIDE SEQUENCE [MRNA]</scope>
    <scope>NOMENCLATURE</scope>
    <source>
        <tissue>Venom gland</tissue>
    </source>
</reference>
<keyword id="KW-1015">Disulfide bond</keyword>
<keyword id="KW-0964">Secreted</keyword>
<keyword id="KW-0732">Signal</keyword>
<keyword id="KW-0800">Toxin</keyword>
<organism>
    <name type="scientific">Ethmostigmus rubripes</name>
    <name type="common">Giant centipede</name>
    <dbReference type="NCBI Taxonomy" id="62613"/>
    <lineage>
        <taxon>Eukaryota</taxon>
        <taxon>Metazoa</taxon>
        <taxon>Ecdysozoa</taxon>
        <taxon>Arthropoda</taxon>
        <taxon>Myriapoda</taxon>
        <taxon>Chilopoda</taxon>
        <taxon>Pleurostigmophora</taxon>
        <taxon>Scolopendromorpha</taxon>
        <taxon>Scolopendridae</taxon>
        <taxon>Ethmostigmus</taxon>
    </lineage>
</organism>
<protein>
    <recommendedName>
        <fullName evidence="2">U-scoloptoxin(16)-Er11a</fullName>
        <shortName evidence="2">U-SLPTX(16)-Er11a</shortName>
    </recommendedName>
</protein>
<name>TXGBA_ETHRU</name>
<accession>P0DQG5</accession>
<feature type="signal peptide" evidence="1">
    <location>
        <begin position="1"/>
        <end position="19"/>
    </location>
</feature>
<feature type="chain" id="PRO_0000446818" description="U-scoloptoxin(16)-Er11a" evidence="3">
    <location>
        <begin position="20"/>
        <end position="119"/>
    </location>
</feature>
<dbReference type="GO" id="GO:0005576">
    <property type="term" value="C:extracellular region"/>
    <property type="evidence" value="ECO:0007669"/>
    <property type="project" value="UniProtKB-SubCell"/>
</dbReference>
<dbReference type="GO" id="GO:0090729">
    <property type="term" value="F:toxin activity"/>
    <property type="evidence" value="ECO:0007669"/>
    <property type="project" value="UniProtKB-KW"/>
</dbReference>
<dbReference type="InterPro" id="IPR029277">
    <property type="entry name" value="SVWC_dom"/>
</dbReference>
<dbReference type="Pfam" id="PF15430">
    <property type="entry name" value="SVWC"/>
    <property type="match status" value="1"/>
</dbReference>
<dbReference type="SMART" id="SM01318">
    <property type="entry name" value="SVWC"/>
    <property type="match status" value="1"/>
</dbReference>
<comment type="subcellular location">
    <subcellularLocation>
        <location evidence="4">Secreted</location>
    </subcellularLocation>
</comment>
<comment type="tissue specificity">
    <text evidence="4">Expressed by the venom gland.</text>
</comment>
<comment type="PTM">
    <text evidence="3">Contains 4 disulfide bonds.</text>
</comment>
<comment type="similarity">
    <text evidence="3">Belongs to the scoloptoxin-16 family.</text>
</comment>
<comment type="caution">
    <text evidence="4">All E.rubripes family members described in 'Undeheim et al., 2014' have not been imported into UniProtKB. Please, refer to this paper to access them.</text>
</comment>
<comment type="online information" name="National Center for Biotechnology Information (NCBI)">
    <link uri="https://www.ncbi.nlm.nih.gov/nuccore/GASI01000129"/>
</comment>
<sequence>MKSWTAAVLSLGLIYLSISQNEGATTEFPTMNYEGRCALDMFTLIEVGDTFNYRHACLSYTCMKRDETFYVQVHTCDAPHFENVTSGMICNFTPPTTGNFPDCCLKVNCIAHLNHTSAN</sequence>
<proteinExistence type="inferred from homology"/>
<evidence type="ECO:0000255" key="1"/>
<evidence type="ECO:0000303" key="2">
    <source>
    </source>
</evidence>
<evidence type="ECO:0000305" key="3"/>
<evidence type="ECO:0000305" key="4">
    <source>
    </source>
</evidence>